<keyword id="KW-0131">Cell cycle</keyword>
<keyword id="KW-0132">Cell division</keyword>
<keyword id="KW-0931">ER-Golgi transport</keyword>
<keyword id="KW-1017">Isopeptide bond</keyword>
<keyword id="KW-0498">Mitosis</keyword>
<keyword id="KW-0539">Nucleus</keyword>
<keyword id="KW-1185">Reference proteome</keyword>
<keyword id="KW-0813">Transport</keyword>
<keyword id="KW-0832">Ubl conjugation</keyword>
<dbReference type="EMBL" id="BC077239">
    <property type="protein sequence ID" value="AAH77239.1"/>
    <property type="molecule type" value="mRNA"/>
</dbReference>
<dbReference type="SMR" id="Q6DE95"/>
<dbReference type="DNASU" id="446487"/>
<dbReference type="GeneID" id="446487"/>
<dbReference type="KEGG" id="xla:446487"/>
<dbReference type="AGR" id="Xenbase:XB-GENE-974989"/>
<dbReference type="CTD" id="446487"/>
<dbReference type="Xenbase" id="XB-GENE-974989">
    <property type="gene designation" value="cul3.L"/>
</dbReference>
<dbReference type="OMA" id="MFKDMTI"/>
<dbReference type="OrthoDB" id="27073at2759"/>
<dbReference type="UniPathway" id="UPA00143"/>
<dbReference type="Proteomes" id="UP000186698">
    <property type="component" value="Chromosome 5L"/>
</dbReference>
<dbReference type="Bgee" id="446487">
    <property type="expression patterns" value="Expressed in gastrula and 19 other cell types or tissues"/>
</dbReference>
<dbReference type="GO" id="GO:0005813">
    <property type="term" value="C:centrosome"/>
    <property type="evidence" value="ECO:0000250"/>
    <property type="project" value="UniProtKB"/>
</dbReference>
<dbReference type="GO" id="GO:0031463">
    <property type="term" value="C:Cul3-RING ubiquitin ligase complex"/>
    <property type="evidence" value="ECO:0000250"/>
    <property type="project" value="UniProtKB"/>
</dbReference>
<dbReference type="GO" id="GO:0005737">
    <property type="term" value="C:cytoplasm"/>
    <property type="evidence" value="ECO:0007669"/>
    <property type="project" value="GOC"/>
</dbReference>
<dbReference type="GO" id="GO:0072686">
    <property type="term" value="C:mitotic spindle"/>
    <property type="evidence" value="ECO:0000250"/>
    <property type="project" value="UniProtKB"/>
</dbReference>
<dbReference type="GO" id="GO:0005634">
    <property type="term" value="C:nucleus"/>
    <property type="evidence" value="ECO:0000250"/>
    <property type="project" value="UniProtKB"/>
</dbReference>
<dbReference type="GO" id="GO:0005827">
    <property type="term" value="C:polar microtubule"/>
    <property type="evidence" value="ECO:0000250"/>
    <property type="project" value="UniProtKB"/>
</dbReference>
<dbReference type="GO" id="GO:0000922">
    <property type="term" value="C:spindle pole"/>
    <property type="evidence" value="ECO:0000250"/>
    <property type="project" value="UniProtKB"/>
</dbReference>
<dbReference type="GO" id="GO:0031625">
    <property type="term" value="F:ubiquitin protein ligase binding"/>
    <property type="evidence" value="ECO:0000318"/>
    <property type="project" value="GO_Central"/>
</dbReference>
<dbReference type="GO" id="GO:0016477">
    <property type="term" value="P:cell migration"/>
    <property type="evidence" value="ECO:0000250"/>
    <property type="project" value="UniProtKB"/>
</dbReference>
<dbReference type="GO" id="GO:0048208">
    <property type="term" value="P:COPII vesicle coating"/>
    <property type="evidence" value="ECO:0000250"/>
    <property type="project" value="UniProtKB"/>
</dbReference>
<dbReference type="GO" id="GO:0040016">
    <property type="term" value="P:embryonic cleavage"/>
    <property type="evidence" value="ECO:0000250"/>
    <property type="project" value="UniProtKB"/>
</dbReference>
<dbReference type="GO" id="GO:0006888">
    <property type="term" value="P:endoplasmic reticulum to Golgi vesicle-mediated transport"/>
    <property type="evidence" value="ECO:0000250"/>
    <property type="project" value="UniProtKB"/>
</dbReference>
<dbReference type="GO" id="GO:0007229">
    <property type="term" value="P:integrin-mediated signaling pathway"/>
    <property type="evidence" value="ECO:0000250"/>
    <property type="project" value="UniProtKB"/>
</dbReference>
<dbReference type="GO" id="GO:0007080">
    <property type="term" value="P:mitotic metaphase chromosome alignment"/>
    <property type="evidence" value="ECO:0000250"/>
    <property type="project" value="UniProtKB"/>
</dbReference>
<dbReference type="GO" id="GO:0035024">
    <property type="term" value="P:negative regulation of Rho protein signal transduction"/>
    <property type="evidence" value="ECO:0000250"/>
    <property type="project" value="UniProtKB"/>
</dbReference>
<dbReference type="GO" id="GO:1901992">
    <property type="term" value="P:positive regulation of mitotic cell cycle phase transition"/>
    <property type="evidence" value="ECO:0000250"/>
    <property type="project" value="UniProtKB"/>
</dbReference>
<dbReference type="GO" id="GO:0045842">
    <property type="term" value="P:positive regulation of mitotic metaphase/anaphase transition"/>
    <property type="evidence" value="ECO:0000250"/>
    <property type="project" value="UniProtKB"/>
</dbReference>
<dbReference type="GO" id="GO:0043161">
    <property type="term" value="P:proteasome-mediated ubiquitin-dependent protein catabolic process"/>
    <property type="evidence" value="ECO:0000250"/>
    <property type="project" value="UniProtKB"/>
</dbReference>
<dbReference type="GO" id="GO:0006513">
    <property type="term" value="P:protein monoubiquitination"/>
    <property type="evidence" value="ECO:0000250"/>
    <property type="project" value="UniProtKB"/>
</dbReference>
<dbReference type="GO" id="GO:0016567">
    <property type="term" value="P:protein ubiquitination"/>
    <property type="evidence" value="ECO:0000250"/>
    <property type="project" value="UniProtKB"/>
</dbReference>
<dbReference type="GO" id="GO:0017145">
    <property type="term" value="P:stem cell division"/>
    <property type="evidence" value="ECO:0000250"/>
    <property type="project" value="UniProtKB"/>
</dbReference>
<dbReference type="GO" id="GO:0043149">
    <property type="term" value="P:stress fiber assembly"/>
    <property type="evidence" value="ECO:0000250"/>
    <property type="project" value="UniProtKB"/>
</dbReference>
<dbReference type="FunFam" id="1.10.10.10:FF:000091">
    <property type="entry name" value="Cullin 3"/>
    <property type="match status" value="1"/>
</dbReference>
<dbReference type="FunFam" id="1.20.1310.10:FF:000001">
    <property type="entry name" value="Cullin 3"/>
    <property type="match status" value="1"/>
</dbReference>
<dbReference type="FunFam" id="1.20.1310.10:FF:000005">
    <property type="entry name" value="Cullin 3"/>
    <property type="match status" value="1"/>
</dbReference>
<dbReference type="FunFam" id="1.20.1310.10:FF:000006">
    <property type="entry name" value="Cullin 3"/>
    <property type="match status" value="1"/>
</dbReference>
<dbReference type="FunFam" id="1.20.1310.10:FF:000002">
    <property type="entry name" value="cullin-3 isoform X1"/>
    <property type="match status" value="1"/>
</dbReference>
<dbReference type="FunFam" id="3.30.230.130:FF:000002">
    <property type="entry name" value="cullin-3 isoform X1"/>
    <property type="match status" value="1"/>
</dbReference>
<dbReference type="Gene3D" id="1.20.1310.10">
    <property type="entry name" value="Cullin Repeats"/>
    <property type="match status" value="4"/>
</dbReference>
<dbReference type="Gene3D" id="3.30.230.130">
    <property type="entry name" value="Cullin, Chain C, Domain 2"/>
    <property type="match status" value="1"/>
</dbReference>
<dbReference type="Gene3D" id="1.10.10.10">
    <property type="entry name" value="Winged helix-like DNA-binding domain superfamily/Winged helix DNA-binding domain"/>
    <property type="match status" value="1"/>
</dbReference>
<dbReference type="InterPro" id="IPR045093">
    <property type="entry name" value="Cullin"/>
</dbReference>
<dbReference type="InterPro" id="IPR016157">
    <property type="entry name" value="Cullin_CS"/>
</dbReference>
<dbReference type="InterPro" id="IPR016158">
    <property type="entry name" value="Cullin_homology"/>
</dbReference>
<dbReference type="InterPro" id="IPR036317">
    <property type="entry name" value="Cullin_homology_sf"/>
</dbReference>
<dbReference type="InterPro" id="IPR001373">
    <property type="entry name" value="Cullin_N"/>
</dbReference>
<dbReference type="InterPro" id="IPR019559">
    <property type="entry name" value="Cullin_neddylation_domain"/>
</dbReference>
<dbReference type="InterPro" id="IPR016159">
    <property type="entry name" value="Cullin_repeat-like_dom_sf"/>
</dbReference>
<dbReference type="InterPro" id="IPR036388">
    <property type="entry name" value="WH-like_DNA-bd_sf"/>
</dbReference>
<dbReference type="InterPro" id="IPR036390">
    <property type="entry name" value="WH_DNA-bd_sf"/>
</dbReference>
<dbReference type="PANTHER" id="PTHR11932">
    <property type="entry name" value="CULLIN"/>
    <property type="match status" value="1"/>
</dbReference>
<dbReference type="Pfam" id="PF00888">
    <property type="entry name" value="Cullin"/>
    <property type="match status" value="1"/>
</dbReference>
<dbReference type="Pfam" id="PF10557">
    <property type="entry name" value="Cullin_Nedd8"/>
    <property type="match status" value="1"/>
</dbReference>
<dbReference type="SMART" id="SM00182">
    <property type="entry name" value="CULLIN"/>
    <property type="match status" value="1"/>
</dbReference>
<dbReference type="SMART" id="SM00884">
    <property type="entry name" value="Cullin_Nedd8"/>
    <property type="match status" value="1"/>
</dbReference>
<dbReference type="SUPFAM" id="SSF75632">
    <property type="entry name" value="Cullin homology domain"/>
    <property type="match status" value="1"/>
</dbReference>
<dbReference type="SUPFAM" id="SSF74788">
    <property type="entry name" value="Cullin repeat-like"/>
    <property type="match status" value="1"/>
</dbReference>
<dbReference type="SUPFAM" id="SSF46785">
    <property type="entry name" value="Winged helix' DNA-binding domain"/>
    <property type="match status" value="1"/>
</dbReference>
<dbReference type="PROSITE" id="PS01256">
    <property type="entry name" value="CULLIN_1"/>
    <property type="match status" value="1"/>
</dbReference>
<dbReference type="PROSITE" id="PS50069">
    <property type="entry name" value="CULLIN_2"/>
    <property type="match status" value="1"/>
</dbReference>
<accession>Q6DE95</accession>
<protein>
    <recommendedName>
        <fullName>Cullin-3-A</fullName>
        <shortName>CUL-3-A</shortName>
    </recommendedName>
</protein>
<sequence length="768" mass="88951">MSNLGKSTGSRKDTKMRIRAFPMTMDEKYVNSIWDLLKNAIQEIQRKNNSGLSFEELYRNAYTMVLHKHGEKLYTGLREVVTEHLINKVREDVLNSLNNNFLQTLNQAWNDHQTAMVMIRDILMYMDRVYVQQNNVENVYNLGLIIFRDQVVRYGCIRDHLRQTLLDMIARERKGEVVDRGAIRNACQMLMILGLEGRSVYEEDFEAPFLEMSAEFFQMESQKFLAENSASVYIKKVEARINEEIERVMHCLDKSTEEPIVKVVERELISKHMKTIVEMENSGLVHMLKNGKTEDLACMYKLFSRVPNGLKTMCECMSLYLREQGKALVSEEGEGKNPVDYIQGLLDLKSRFDRFLQESFSNDRLFKQTIAGDFEYFLNLNSRSPEYLSLFIDDKLKKGVKGLTEQEVESILDKAMVLFRFMQEKDVFERYYKQHLARRLLTNKSVSDDSEKNMISKLKTECGCQFTSKLEGMFRDMSISNTTMDEFRQHLQTTGVSLGGVDLTVRVLTTGYWPTQSATPKCNIPPAPRHAFEIFRRFYLAKHSGRQLTLQHHMGSADLNATFYGPVKKEDGSEVGVGGAQVTGSNTRKHILQVSTFQMTILMLFNNRDKYTFEEIQQETDIPERELVRALQSLACGKPTQRVLTKEPKSKEIESGHMFTVNDQFTSKLHRVKIQTVAAKQGESDPERKETRQKVDDDRKHEIEAAIVRIMKSRKKMQHNVLVAEVTQQLKARFLPSPVVIKKRIEGLIEREYLARTPEDRKVYTYVA</sequence>
<feature type="chain" id="PRO_0000380252" description="Cullin-3-A">
    <location>
        <begin position="1"/>
        <end position="768"/>
    </location>
</feature>
<feature type="domain" description="Cullin neddylation" evidence="4">
    <location>
        <begin position="698"/>
        <end position="760"/>
    </location>
</feature>
<feature type="region of interest" description="Disordered" evidence="6">
    <location>
        <begin position="677"/>
        <end position="698"/>
    </location>
</feature>
<feature type="compositionally biased region" description="Basic and acidic residues" evidence="6">
    <location>
        <begin position="682"/>
        <end position="698"/>
    </location>
</feature>
<feature type="cross-link" description="Glycyl lysine isopeptide (Lys-Gly) (interchain with G-Cter in NEDD8)" evidence="1">
    <location>
        <position position="712"/>
    </location>
</feature>
<evidence type="ECO:0000250" key="1">
    <source>
        <dbReference type="UniProtKB" id="Q13616"/>
    </source>
</evidence>
<evidence type="ECO:0000250" key="2">
    <source>
        <dbReference type="UniProtKB" id="Q13618"/>
    </source>
</evidence>
<evidence type="ECO:0000250" key="3">
    <source>
        <dbReference type="UniProtKB" id="Q9JLV5"/>
    </source>
</evidence>
<evidence type="ECO:0000255" key="4"/>
<evidence type="ECO:0000255" key="5">
    <source>
        <dbReference type="PROSITE-ProRule" id="PRU00330"/>
    </source>
</evidence>
<evidence type="ECO:0000256" key="6">
    <source>
        <dbReference type="SAM" id="MobiDB-lite"/>
    </source>
</evidence>
<evidence type="ECO:0000269" key="7">
    <source>
    </source>
</evidence>
<reference key="1">
    <citation type="submission" date="2004-07" db="EMBL/GenBank/DDBJ databases">
        <authorList>
            <consortium name="NIH - Xenopus Gene Collection (XGC) project"/>
        </authorList>
    </citation>
    <scope>NUCLEOTIDE SEQUENCE [LARGE SCALE MRNA]</scope>
    <source>
        <tissue>Ovary</tissue>
    </source>
</reference>
<reference key="2">
    <citation type="journal article" date="2008" name="Dev. Dyn.">
        <title>Xenopus BTBD6 and its Drosophila homologue lute are required for neuronal development.</title>
        <authorList>
            <person name="Bury F.J."/>
            <person name="Moers V."/>
            <person name="Yan J."/>
            <person name="Souopgui J."/>
            <person name="Quan X.J."/>
            <person name="De Geest N."/>
            <person name="Kricha S."/>
            <person name="Hassan B.A."/>
            <person name="Bellefroid E.J."/>
        </authorList>
    </citation>
    <scope>INTERACTION WITH BTBD6</scope>
</reference>
<comment type="function">
    <text evidence="2 3">Probable core component of cullin-based SCF-like E3 ubiquitin-protein ligase complexes which mediate the ubiquitination and subsequent proteasomal degradation of target proteins (By similarity). The E3 ubiquitin-protein ligase activity of the complex is dependent on the neddylation of the cullin subunit (By similarity). Involved in ER-Golgi transport by regulating the size of COPII coats, thereby playing a key role in collagen export, which is required for embryonic stem (ES) cells division (By similarity). May play a role in the regulation of mittotic entry via ubiquitination of aurka (By similarity).</text>
</comment>
<comment type="pathway">
    <text>Protein modification; protein ubiquitination.</text>
</comment>
<comment type="subunit">
    <text evidence="2 3 7">Component of multiple BCR (BTB-CUL3-RBX1) E3 ubiquitin-protein ligase complexes formed of cul3, rbx1 and a variable BTB domain-containing protein acting as both, adapter to cullin and substrate recognition subunit (By similarity). Interacts with btbd6 (PubMed:18855900).</text>
</comment>
<comment type="subcellular location">
    <subcellularLocation>
        <location evidence="2">Nucleus</location>
    </subcellularLocation>
</comment>
<comment type="PTM">
    <text evidence="2">Neddylated. Attachment of NEDD8 is required for the E3 ubiquitin-protein ligase activity of the SCF-like complex.</text>
</comment>
<comment type="similarity">
    <text evidence="5">Belongs to the cullin family.</text>
</comment>
<proteinExistence type="evidence at protein level"/>
<gene>
    <name type="primary">cul3a</name>
</gene>
<organism>
    <name type="scientific">Xenopus laevis</name>
    <name type="common">African clawed frog</name>
    <dbReference type="NCBI Taxonomy" id="8355"/>
    <lineage>
        <taxon>Eukaryota</taxon>
        <taxon>Metazoa</taxon>
        <taxon>Chordata</taxon>
        <taxon>Craniata</taxon>
        <taxon>Vertebrata</taxon>
        <taxon>Euteleostomi</taxon>
        <taxon>Amphibia</taxon>
        <taxon>Batrachia</taxon>
        <taxon>Anura</taxon>
        <taxon>Pipoidea</taxon>
        <taxon>Pipidae</taxon>
        <taxon>Xenopodinae</taxon>
        <taxon>Xenopus</taxon>
        <taxon>Xenopus</taxon>
    </lineage>
</organism>
<name>CUL3A_XENLA</name>